<reference key="1">
    <citation type="journal article" date="2007" name="PLoS ONE">
        <title>Molecular correlates of host specialization in Staphylococcus aureus.</title>
        <authorList>
            <person name="Herron-Olson L."/>
            <person name="Fitzgerald J.R."/>
            <person name="Musser J.M."/>
            <person name="Kapur V."/>
        </authorList>
    </citation>
    <scope>NUCLEOTIDE SEQUENCE [LARGE SCALE GENOMIC DNA]</scope>
    <source>
        <strain>bovine RF122 / ET3-1</strain>
    </source>
</reference>
<evidence type="ECO:0000250" key="1"/>
<evidence type="ECO:0000305" key="2"/>
<dbReference type="EC" id="1.7.-.-"/>
<dbReference type="EMBL" id="AJ938182">
    <property type="protein sequence ID" value="CAI80199.1"/>
    <property type="molecule type" value="Genomic_DNA"/>
</dbReference>
<dbReference type="RefSeq" id="WP_000677261.1">
    <property type="nucleotide sequence ID" value="NC_007622.1"/>
</dbReference>
<dbReference type="SMR" id="Q2YSA2"/>
<dbReference type="KEGG" id="sab:SAB0511"/>
<dbReference type="HOGENOM" id="CLU_055322_1_2_9"/>
<dbReference type="GO" id="GO:0005829">
    <property type="term" value="C:cytosol"/>
    <property type="evidence" value="ECO:0007669"/>
    <property type="project" value="TreeGrafter"/>
</dbReference>
<dbReference type="GO" id="GO:0010181">
    <property type="term" value="F:FMN binding"/>
    <property type="evidence" value="ECO:0007669"/>
    <property type="project" value="TreeGrafter"/>
</dbReference>
<dbReference type="GO" id="GO:0016491">
    <property type="term" value="F:oxidoreductase activity"/>
    <property type="evidence" value="ECO:0007669"/>
    <property type="project" value="UniProtKB-KW"/>
</dbReference>
<dbReference type="Gene3D" id="3.40.50.360">
    <property type="match status" value="1"/>
</dbReference>
<dbReference type="InterPro" id="IPR029039">
    <property type="entry name" value="Flavoprotein-like_sf"/>
</dbReference>
<dbReference type="InterPro" id="IPR005025">
    <property type="entry name" value="FMN_Rdtase-like_dom"/>
</dbReference>
<dbReference type="InterPro" id="IPR050712">
    <property type="entry name" value="NAD(P)H-dep_reductase"/>
</dbReference>
<dbReference type="PANTHER" id="PTHR30543">
    <property type="entry name" value="CHROMATE REDUCTASE"/>
    <property type="match status" value="1"/>
</dbReference>
<dbReference type="PANTHER" id="PTHR30543:SF21">
    <property type="entry name" value="NAD(P)H-DEPENDENT FMN REDUCTASE LOT6"/>
    <property type="match status" value="1"/>
</dbReference>
<dbReference type="Pfam" id="PF03358">
    <property type="entry name" value="FMN_red"/>
    <property type="match status" value="1"/>
</dbReference>
<dbReference type="SUPFAM" id="SSF52218">
    <property type="entry name" value="Flavoproteins"/>
    <property type="match status" value="1"/>
</dbReference>
<feature type="chain" id="PRO_0000245990" description="FMN-dependent NADPH-azoreductase">
    <location>
        <begin position="1"/>
        <end position="188"/>
    </location>
</feature>
<gene>
    <name type="primary">azo1</name>
    <name type="ordered locus">SAB0511</name>
</gene>
<sequence length="188" mass="20912">MKGLIIIGSAQVNSHTSALARYLTEHFKTHDIEAEIFDLAEKPLNQLDFSGTTPSIDEIKQNMKDLKEKAMAADFLILGTPNYHGSYSGILKNALDHLNMDYFKMKPVGLIGNSGGIVSSEPLSHLRVIVRSLLGIAVPTQIATHDSDFAKNEDGSYYLNDSEFQLRARLFVDQIVSFVNNSPYEHLK</sequence>
<accession>Q2YSA2</accession>
<name>AZO1_STAAB</name>
<comment type="function">
    <text evidence="1">Catalyzes the reductive cleavage of azo bond in aromatic azo compounds to the corresponding amines. Requires NADPH, but not NADH, as an electron donor for its activity (By similarity).</text>
</comment>
<comment type="cofactor">
    <cofactor evidence="1">
        <name>FMN</name>
        <dbReference type="ChEBI" id="CHEBI:58210"/>
    </cofactor>
</comment>
<comment type="subunit">
    <text evidence="1">Homotetramer.</text>
</comment>
<comment type="similarity">
    <text evidence="2">Belongs to the azoreductase type 2 family.</text>
</comment>
<protein>
    <recommendedName>
        <fullName>FMN-dependent NADPH-azoreductase</fullName>
        <ecNumber>1.7.-.-</ecNumber>
    </recommendedName>
    <alternativeName>
        <fullName>NADPH-dependent flavo-azoreductase</fullName>
    </alternativeName>
    <alternativeName>
        <fullName>NADPH-flavin azoreductase</fullName>
    </alternativeName>
</protein>
<keyword id="KW-0285">Flavoprotein</keyword>
<keyword id="KW-0288">FMN</keyword>
<keyword id="KW-0521">NADP</keyword>
<keyword id="KW-0560">Oxidoreductase</keyword>
<proteinExistence type="inferred from homology"/>
<organism>
    <name type="scientific">Staphylococcus aureus (strain bovine RF122 / ET3-1)</name>
    <dbReference type="NCBI Taxonomy" id="273036"/>
    <lineage>
        <taxon>Bacteria</taxon>
        <taxon>Bacillati</taxon>
        <taxon>Bacillota</taxon>
        <taxon>Bacilli</taxon>
        <taxon>Bacillales</taxon>
        <taxon>Staphylococcaceae</taxon>
        <taxon>Staphylococcus</taxon>
    </lineage>
</organism>